<dbReference type="EMBL" id="BC024879">
    <property type="protein sequence ID" value="AAH24879.1"/>
    <property type="molecule type" value="mRNA"/>
</dbReference>
<dbReference type="EMBL" id="AK018403">
    <property type="status" value="NOT_ANNOTATED_CDS"/>
    <property type="molecule type" value="mRNA"/>
</dbReference>
<dbReference type="CCDS" id="CCDS27743.1"/>
<dbReference type="SMR" id="Q8R3Q2"/>
<dbReference type="FunCoup" id="Q8R3Q2">
    <property type="interactions" value="3522"/>
</dbReference>
<dbReference type="IntAct" id="Q8R3Q2">
    <property type="interactions" value="3"/>
</dbReference>
<dbReference type="STRING" id="10090.ENSMUSP00000154087"/>
<dbReference type="GlyGen" id="Q8R3Q2">
    <property type="glycosylation" value="2 sites, 1 O-linked glycan (1 site)"/>
</dbReference>
<dbReference type="iPTMnet" id="Q8R3Q2"/>
<dbReference type="PhosphoSitePlus" id="Q8R3Q2"/>
<dbReference type="jPOST" id="Q8R3Q2"/>
<dbReference type="PaxDb" id="10090-ENSMUSP00000086167"/>
<dbReference type="ProteomicsDB" id="289873"/>
<dbReference type="Pumba" id="Q8R3Q2"/>
<dbReference type="AGR" id="MGI:1918724"/>
<dbReference type="MGI" id="MGI:1918724">
    <property type="gene designation" value="Ppp6r2"/>
</dbReference>
<dbReference type="eggNOG" id="KOG2073">
    <property type="taxonomic scope" value="Eukaryota"/>
</dbReference>
<dbReference type="InParanoid" id="Q8R3Q2"/>
<dbReference type="PhylomeDB" id="Q8R3Q2"/>
<dbReference type="ChiTaRS" id="Ppp6r2">
    <property type="organism name" value="mouse"/>
</dbReference>
<dbReference type="PRO" id="PR:Q8R3Q2"/>
<dbReference type="Proteomes" id="UP000000589">
    <property type="component" value="Unplaced"/>
</dbReference>
<dbReference type="RNAct" id="Q8R3Q2">
    <property type="molecule type" value="protein"/>
</dbReference>
<dbReference type="GO" id="GO:0005737">
    <property type="term" value="C:cytoplasm"/>
    <property type="evidence" value="ECO:0007669"/>
    <property type="project" value="UniProtKB-SubCell"/>
</dbReference>
<dbReference type="GO" id="GO:0019903">
    <property type="term" value="F:protein phosphatase binding"/>
    <property type="evidence" value="ECO:0000247"/>
    <property type="project" value="MGI"/>
</dbReference>
<dbReference type="GO" id="GO:0019888">
    <property type="term" value="F:protein phosphatase regulator activity"/>
    <property type="evidence" value="ECO:0000247"/>
    <property type="project" value="MGI"/>
</dbReference>
<dbReference type="InterPro" id="IPR016024">
    <property type="entry name" value="ARM-type_fold"/>
</dbReference>
<dbReference type="InterPro" id="IPR007587">
    <property type="entry name" value="SAPS"/>
</dbReference>
<dbReference type="PANTHER" id="PTHR12634:SF15">
    <property type="entry name" value="SERINE_THREONINE-PROTEIN PHOSPHATASE 6 REGULATORY SUBUNIT 2"/>
    <property type="match status" value="1"/>
</dbReference>
<dbReference type="PANTHER" id="PTHR12634">
    <property type="entry name" value="SIT4 YEAST -ASSOCIATING PROTEIN-RELATED"/>
    <property type="match status" value="1"/>
</dbReference>
<dbReference type="Pfam" id="PF04499">
    <property type="entry name" value="SAPS"/>
    <property type="match status" value="2"/>
</dbReference>
<dbReference type="SUPFAM" id="SSF48371">
    <property type="entry name" value="ARM repeat"/>
    <property type="match status" value="1"/>
</dbReference>
<name>PP6R2_MOUSE</name>
<accession>Q8R3Q2</accession>
<accession>Q9CXB7</accession>
<gene>
    <name type="primary">Ppp6r2</name>
    <name type="synonym">Kiaa0685</name>
    <name type="synonym">Pp6r2</name>
    <name type="synonym">Saps2</name>
</gene>
<keyword id="KW-0963">Cytoplasm</keyword>
<keyword id="KW-0597">Phosphoprotein</keyword>
<keyword id="KW-1185">Reference proteome</keyword>
<protein>
    <recommendedName>
        <fullName>Serine/threonine-protein phosphatase 6 regulatory subunit 2</fullName>
    </recommendedName>
    <alternativeName>
        <fullName>SAPS domain family member 2</fullName>
    </alternativeName>
</protein>
<sequence>MFWKFDLNTTSHVDKLLDKEHVTLQELMDEDDILQECKAQNQKLLDFLCRQQCMEELVNLITQDPPQDMEEKVRFKYPNTACELLTCDVPQISDRLGEDESLLNLLYDFLDQEPPLNPLLASFFSKTIGNLIARKTEQVIMFLKKKEKFISQLLKHIGTSALMDLLLRLVSCVEPVGLRQEVLHWLNEEKIIQRLVALIHPHQDEDRQSNASQALCDIIRLGRDQGSQLQETVEPDPLLITLESQDCVEQLLKNMFDGDQTESCLVSGMQVLLALLEPRRVGTEGLVDSFSQGLERSHSVSSSILRGIEPWLKNFHQLLLNPPKKKAILTTIGVLEEPLGNARLHGARLMAALLHTNTPGINQELCRLNTMDLLLDLFFKYTWNNFLHLQVELCIAAILSHAAREEQAEASGSDGKVEPLQGSGDGNGKLETTPSITSPPENTMVTHLFQKCCLVQRILEAWEANDHTQAAGGMRRGNMGHLTRIANAVVQNLEQGPVQAHISEVIRGLPADCRGRWESFVEETLMETNRRNTVDLAFSEYQIQQMTANFVDQFGFNDEEFADQDDNINAPFDRIAEINFNIEADEDSPSAALFEACCSDRIQPFDDDEEEDIWEDDETRCAARVMARARFGAPHVSDNYSKNALEHGGQDRKTGSAVARNVPGLAAPSSPTQKEGPRSESDSAGTTWTAVFDEPVNPLSATPGAARDVGSSAWAAGPSVVEEKGWAKFTDFQPFCCSETGPRCSSPVDMDHSNAEGGQSPGPEKTFGPTSPCAWNVCVTRKAPLVASDSSSSGGSDSEDDEKAAGAVEAVCTGHTGKVSPPPRTAEAAVGRAECPDSTVLAPACPAPSEVTISPAVATIAPSKAGSPTATIVVSSSVAAAVPPGPIVAVTTAAPAIVATLGTMTKDRKADALPEGAALNGPV</sequence>
<proteinExistence type="evidence at protein level"/>
<reference key="1">
    <citation type="journal article" date="2004" name="Genome Res.">
        <title>The status, quality, and expansion of the NIH full-length cDNA project: the Mammalian Gene Collection (MGC).</title>
        <authorList>
            <consortium name="The MGC Project Team"/>
        </authorList>
    </citation>
    <scope>NUCLEOTIDE SEQUENCE [LARGE SCALE MRNA]</scope>
</reference>
<reference key="2">
    <citation type="journal article" date="2005" name="Science">
        <title>The transcriptional landscape of the mammalian genome.</title>
        <authorList>
            <person name="Carninci P."/>
            <person name="Kasukawa T."/>
            <person name="Katayama S."/>
            <person name="Gough J."/>
            <person name="Frith M.C."/>
            <person name="Maeda N."/>
            <person name="Oyama R."/>
            <person name="Ravasi T."/>
            <person name="Lenhard B."/>
            <person name="Wells C."/>
            <person name="Kodzius R."/>
            <person name="Shimokawa K."/>
            <person name="Bajic V.B."/>
            <person name="Brenner S.E."/>
            <person name="Batalov S."/>
            <person name="Forrest A.R."/>
            <person name="Zavolan M."/>
            <person name="Davis M.J."/>
            <person name="Wilming L.G."/>
            <person name="Aidinis V."/>
            <person name="Allen J.E."/>
            <person name="Ambesi-Impiombato A."/>
            <person name="Apweiler R."/>
            <person name="Aturaliya R.N."/>
            <person name="Bailey T.L."/>
            <person name="Bansal M."/>
            <person name="Baxter L."/>
            <person name="Beisel K.W."/>
            <person name="Bersano T."/>
            <person name="Bono H."/>
            <person name="Chalk A.M."/>
            <person name="Chiu K.P."/>
            <person name="Choudhary V."/>
            <person name="Christoffels A."/>
            <person name="Clutterbuck D.R."/>
            <person name="Crowe M.L."/>
            <person name="Dalla E."/>
            <person name="Dalrymple B.P."/>
            <person name="de Bono B."/>
            <person name="Della Gatta G."/>
            <person name="di Bernardo D."/>
            <person name="Down T."/>
            <person name="Engstrom P."/>
            <person name="Fagiolini M."/>
            <person name="Faulkner G."/>
            <person name="Fletcher C.F."/>
            <person name="Fukushima T."/>
            <person name="Furuno M."/>
            <person name="Futaki S."/>
            <person name="Gariboldi M."/>
            <person name="Georgii-Hemming P."/>
            <person name="Gingeras T.R."/>
            <person name="Gojobori T."/>
            <person name="Green R.E."/>
            <person name="Gustincich S."/>
            <person name="Harbers M."/>
            <person name="Hayashi Y."/>
            <person name="Hensch T.K."/>
            <person name="Hirokawa N."/>
            <person name="Hill D."/>
            <person name="Huminiecki L."/>
            <person name="Iacono M."/>
            <person name="Ikeo K."/>
            <person name="Iwama A."/>
            <person name="Ishikawa T."/>
            <person name="Jakt M."/>
            <person name="Kanapin A."/>
            <person name="Katoh M."/>
            <person name="Kawasawa Y."/>
            <person name="Kelso J."/>
            <person name="Kitamura H."/>
            <person name="Kitano H."/>
            <person name="Kollias G."/>
            <person name="Krishnan S.P."/>
            <person name="Kruger A."/>
            <person name="Kummerfeld S.K."/>
            <person name="Kurochkin I.V."/>
            <person name="Lareau L.F."/>
            <person name="Lazarevic D."/>
            <person name="Lipovich L."/>
            <person name="Liu J."/>
            <person name="Liuni S."/>
            <person name="McWilliam S."/>
            <person name="Madan Babu M."/>
            <person name="Madera M."/>
            <person name="Marchionni L."/>
            <person name="Matsuda H."/>
            <person name="Matsuzawa S."/>
            <person name="Miki H."/>
            <person name="Mignone F."/>
            <person name="Miyake S."/>
            <person name="Morris K."/>
            <person name="Mottagui-Tabar S."/>
            <person name="Mulder N."/>
            <person name="Nakano N."/>
            <person name="Nakauchi H."/>
            <person name="Ng P."/>
            <person name="Nilsson R."/>
            <person name="Nishiguchi S."/>
            <person name="Nishikawa S."/>
            <person name="Nori F."/>
            <person name="Ohara O."/>
            <person name="Okazaki Y."/>
            <person name="Orlando V."/>
            <person name="Pang K.C."/>
            <person name="Pavan W.J."/>
            <person name="Pavesi G."/>
            <person name="Pesole G."/>
            <person name="Petrovsky N."/>
            <person name="Piazza S."/>
            <person name="Reed J."/>
            <person name="Reid J.F."/>
            <person name="Ring B.Z."/>
            <person name="Ringwald M."/>
            <person name="Rost B."/>
            <person name="Ruan Y."/>
            <person name="Salzberg S.L."/>
            <person name="Sandelin A."/>
            <person name="Schneider C."/>
            <person name="Schoenbach C."/>
            <person name="Sekiguchi K."/>
            <person name="Semple C.A."/>
            <person name="Seno S."/>
            <person name="Sessa L."/>
            <person name="Sheng Y."/>
            <person name="Shibata Y."/>
            <person name="Shimada H."/>
            <person name="Shimada K."/>
            <person name="Silva D."/>
            <person name="Sinclair B."/>
            <person name="Sperling S."/>
            <person name="Stupka E."/>
            <person name="Sugiura K."/>
            <person name="Sultana R."/>
            <person name="Takenaka Y."/>
            <person name="Taki K."/>
            <person name="Tammoja K."/>
            <person name="Tan S.L."/>
            <person name="Tang S."/>
            <person name="Taylor M.S."/>
            <person name="Tegner J."/>
            <person name="Teichmann S.A."/>
            <person name="Ueda H.R."/>
            <person name="van Nimwegen E."/>
            <person name="Verardo R."/>
            <person name="Wei C.L."/>
            <person name="Yagi K."/>
            <person name="Yamanishi H."/>
            <person name="Zabarovsky E."/>
            <person name="Zhu S."/>
            <person name="Zimmer A."/>
            <person name="Hide W."/>
            <person name="Bult C."/>
            <person name="Grimmond S.M."/>
            <person name="Teasdale R.D."/>
            <person name="Liu E.T."/>
            <person name="Brusic V."/>
            <person name="Quackenbush J."/>
            <person name="Wahlestedt C."/>
            <person name="Mattick J.S."/>
            <person name="Hume D.A."/>
            <person name="Kai C."/>
            <person name="Sasaki D."/>
            <person name="Tomaru Y."/>
            <person name="Fukuda S."/>
            <person name="Kanamori-Katayama M."/>
            <person name="Suzuki M."/>
            <person name="Aoki J."/>
            <person name="Arakawa T."/>
            <person name="Iida J."/>
            <person name="Imamura K."/>
            <person name="Itoh M."/>
            <person name="Kato T."/>
            <person name="Kawaji H."/>
            <person name="Kawagashira N."/>
            <person name="Kawashima T."/>
            <person name="Kojima M."/>
            <person name="Kondo S."/>
            <person name="Konno H."/>
            <person name="Nakano K."/>
            <person name="Ninomiya N."/>
            <person name="Nishio T."/>
            <person name="Okada M."/>
            <person name="Plessy C."/>
            <person name="Shibata K."/>
            <person name="Shiraki T."/>
            <person name="Suzuki S."/>
            <person name="Tagami M."/>
            <person name="Waki K."/>
            <person name="Watahiki A."/>
            <person name="Okamura-Oho Y."/>
            <person name="Suzuki H."/>
            <person name="Kawai J."/>
            <person name="Hayashizaki Y."/>
        </authorList>
    </citation>
    <scope>NUCLEOTIDE SEQUENCE [LARGE SCALE MRNA] OF 1-206</scope>
    <source>
        <strain>C57BL/6J</strain>
        <tissue>Embryonic lung</tissue>
    </source>
</reference>
<reference key="3">
    <citation type="journal article" date="2004" name="Mol. Cell. Proteomics">
        <title>Phosphoproteomic analysis of the developing mouse brain.</title>
        <authorList>
            <person name="Ballif B.A."/>
            <person name="Villen J."/>
            <person name="Beausoleil S.A."/>
            <person name="Schwartz D."/>
            <person name="Gygi S.P."/>
        </authorList>
    </citation>
    <scope>IDENTIFICATION BY MASS SPECTROMETRY [LARGE SCALE ANALYSIS]</scope>
    <source>
        <tissue>Embryonic brain</tissue>
    </source>
</reference>
<reference key="4">
    <citation type="journal article" date="2006" name="J. Biol. Chem.">
        <title>Protein phosphatase 6 subunit with conserved Sit4-associated protein domain targets IkappaBepsilon.</title>
        <authorList>
            <person name="Stefansson B."/>
            <person name="Brautigan D.L."/>
        </authorList>
    </citation>
    <scope>TISSUE SPECIFICITY</scope>
</reference>
<reference key="5">
    <citation type="journal article" date="2010" name="Cell">
        <title>A tissue-specific atlas of mouse protein phosphorylation and expression.</title>
        <authorList>
            <person name="Huttlin E.L."/>
            <person name="Jedrychowski M.P."/>
            <person name="Elias J.E."/>
            <person name="Goswami T."/>
            <person name="Rad R."/>
            <person name="Beausoleil S.A."/>
            <person name="Villen J."/>
            <person name="Haas W."/>
            <person name="Sowa M.E."/>
            <person name="Gygi S.P."/>
        </authorList>
    </citation>
    <scope>PHOSPHORYLATION [LARGE SCALE ANALYSIS] AT SER-746</scope>
    <scope>IDENTIFICATION BY MASS SPECTROMETRY [LARGE SCALE ANALYSIS]</scope>
    <source>
        <tissue>Brain</tissue>
        <tissue>Brown adipose tissue</tissue>
        <tissue>Heart</tissue>
        <tissue>Lung</tissue>
        <tissue>Pancreas</tissue>
        <tissue>Testis</tissue>
    </source>
</reference>
<evidence type="ECO:0000250" key="1"/>
<evidence type="ECO:0000250" key="2">
    <source>
        <dbReference type="UniProtKB" id="O75170"/>
    </source>
</evidence>
<evidence type="ECO:0000256" key="3">
    <source>
        <dbReference type="SAM" id="MobiDB-lite"/>
    </source>
</evidence>
<evidence type="ECO:0000269" key="4">
    <source>
    </source>
</evidence>
<evidence type="ECO:0000305" key="5"/>
<evidence type="ECO:0007744" key="6">
    <source>
    </source>
</evidence>
<comment type="function">
    <text>Regulatory subunit of protein phosphatase 6 (PP6). May function as a scaffolding PP6 subunit. Involved in the PP6-mediated dephosphorylation of NFKBIE opposing its degradation in response to TNF-alpha.</text>
</comment>
<comment type="subunit">
    <text evidence="1">Protein phosphatase 6 (PP6) holoenzyme is proposed to be a heterotrimeric complex formed by the catalytic subunit, a SAPS domain-containing subunit (PP6R) and an ankyrin repeat-domain containing regulatory subunit (ARS). Interacts with PPP6C and NFKBIE. Interacts with ANKRD28 (By similarity).</text>
</comment>
<comment type="subcellular location">
    <subcellularLocation>
        <location evidence="1">Cytoplasm</location>
    </subcellularLocation>
</comment>
<comment type="tissue specificity">
    <text evidence="4">Strongest expression in bladder and lower levels found in heart and pancreas. Very weak expression observed in all other tissues tested.</text>
</comment>
<comment type="similarity">
    <text evidence="5">Belongs to the SAPS family.</text>
</comment>
<comment type="sequence caution" evidence="5">
    <conflict type="frameshift">
        <sequence resource="EMBL" id="AK018403"/>
    </conflict>
</comment>
<organism>
    <name type="scientific">Mus musculus</name>
    <name type="common">Mouse</name>
    <dbReference type="NCBI Taxonomy" id="10090"/>
    <lineage>
        <taxon>Eukaryota</taxon>
        <taxon>Metazoa</taxon>
        <taxon>Chordata</taxon>
        <taxon>Craniata</taxon>
        <taxon>Vertebrata</taxon>
        <taxon>Euteleostomi</taxon>
        <taxon>Mammalia</taxon>
        <taxon>Eutheria</taxon>
        <taxon>Euarchontoglires</taxon>
        <taxon>Glires</taxon>
        <taxon>Rodentia</taxon>
        <taxon>Myomorpha</taxon>
        <taxon>Muroidea</taxon>
        <taxon>Muridae</taxon>
        <taxon>Murinae</taxon>
        <taxon>Mus</taxon>
        <taxon>Mus</taxon>
    </lineage>
</organism>
<feature type="chain" id="PRO_0000046099" description="Serine/threonine-protein phosphatase 6 regulatory subunit 2">
    <location>
        <begin position="1"/>
        <end position="923"/>
    </location>
</feature>
<feature type="region of interest" description="Disordered" evidence="3">
    <location>
        <begin position="409"/>
        <end position="441"/>
    </location>
</feature>
<feature type="region of interest" description="Disordered" evidence="3">
    <location>
        <begin position="662"/>
        <end position="685"/>
    </location>
</feature>
<feature type="region of interest" description="Disordered" evidence="3">
    <location>
        <begin position="743"/>
        <end position="766"/>
    </location>
</feature>
<feature type="compositionally biased region" description="Polar residues" evidence="3">
    <location>
        <begin position="430"/>
        <end position="441"/>
    </location>
</feature>
<feature type="modified residue" description="Phosphoserine" evidence="2">
    <location>
        <position position="289"/>
    </location>
</feature>
<feature type="modified residue" description="Phosphoserine" evidence="6">
    <location>
        <position position="746"/>
    </location>
</feature>
<feature type="modified residue" description="Phosphoserine" evidence="2">
    <location>
        <position position="796"/>
    </location>
</feature>
<feature type="sequence conflict" description="In Ref. 2; AK018403." evidence="5" ref="2">
    <original>L</original>
    <variation>H</variation>
    <location>
        <position position="106"/>
    </location>
</feature>
<feature type="sequence conflict" description="In Ref. 2." evidence="5" ref="2">
    <original>L</original>
    <variation>C</variation>
    <location>
        <position position="167"/>
    </location>
</feature>
<feature type="sequence conflict" description="In Ref. 2." evidence="5" ref="2">
    <original>L</original>
    <variation>I</variation>
    <location>
        <position position="195"/>
    </location>
</feature>